<accession>A8EZK4</accession>
<feature type="chain" id="PRO_1000052814" description="Large ribosomal subunit protein uL5">
    <location>
        <begin position="1"/>
        <end position="181"/>
    </location>
</feature>
<protein>
    <recommendedName>
        <fullName evidence="1">Large ribosomal subunit protein uL5</fullName>
    </recommendedName>
    <alternativeName>
        <fullName evidence="2">50S ribosomal protein L5</fullName>
    </alternativeName>
</protein>
<organism>
    <name type="scientific">Rickettsia canadensis (strain McKiel)</name>
    <dbReference type="NCBI Taxonomy" id="293613"/>
    <lineage>
        <taxon>Bacteria</taxon>
        <taxon>Pseudomonadati</taxon>
        <taxon>Pseudomonadota</taxon>
        <taxon>Alphaproteobacteria</taxon>
        <taxon>Rickettsiales</taxon>
        <taxon>Rickettsiaceae</taxon>
        <taxon>Rickettsieae</taxon>
        <taxon>Rickettsia</taxon>
        <taxon>belli group</taxon>
    </lineage>
</organism>
<keyword id="KW-0687">Ribonucleoprotein</keyword>
<keyword id="KW-0689">Ribosomal protein</keyword>
<keyword id="KW-0694">RNA-binding</keyword>
<keyword id="KW-0699">rRNA-binding</keyword>
<keyword id="KW-0820">tRNA-binding</keyword>
<reference key="1">
    <citation type="submission" date="2007-09" db="EMBL/GenBank/DDBJ databases">
        <title>Complete genome sequence of Rickettsia canadensis.</title>
        <authorList>
            <person name="Madan A."/>
            <person name="Fahey J."/>
            <person name="Helton E."/>
            <person name="Ketteman M."/>
            <person name="Madan A."/>
            <person name="Rodrigues S."/>
            <person name="Sanchez A."/>
            <person name="Whiting M."/>
            <person name="Dasch G."/>
            <person name="Eremeeva M."/>
        </authorList>
    </citation>
    <scope>NUCLEOTIDE SEQUENCE [LARGE SCALE GENOMIC DNA]</scope>
    <source>
        <strain>McKiel</strain>
    </source>
</reference>
<name>RL5_RICCK</name>
<evidence type="ECO:0000255" key="1">
    <source>
        <dbReference type="HAMAP-Rule" id="MF_01333"/>
    </source>
</evidence>
<evidence type="ECO:0000305" key="2"/>
<dbReference type="EMBL" id="CP000409">
    <property type="protein sequence ID" value="ABV73787.1"/>
    <property type="molecule type" value="Genomic_DNA"/>
</dbReference>
<dbReference type="RefSeq" id="WP_012148982.1">
    <property type="nucleotide sequence ID" value="NC_009879.1"/>
</dbReference>
<dbReference type="SMR" id="A8EZK4"/>
<dbReference type="STRING" id="293613.A1E_04310"/>
<dbReference type="KEGG" id="rcm:A1E_04310"/>
<dbReference type="eggNOG" id="COG0094">
    <property type="taxonomic scope" value="Bacteria"/>
</dbReference>
<dbReference type="HOGENOM" id="CLU_061015_2_1_5"/>
<dbReference type="Proteomes" id="UP000007056">
    <property type="component" value="Chromosome"/>
</dbReference>
<dbReference type="GO" id="GO:1990904">
    <property type="term" value="C:ribonucleoprotein complex"/>
    <property type="evidence" value="ECO:0007669"/>
    <property type="project" value="UniProtKB-KW"/>
</dbReference>
<dbReference type="GO" id="GO:0005840">
    <property type="term" value="C:ribosome"/>
    <property type="evidence" value="ECO:0007669"/>
    <property type="project" value="UniProtKB-KW"/>
</dbReference>
<dbReference type="GO" id="GO:0019843">
    <property type="term" value="F:rRNA binding"/>
    <property type="evidence" value="ECO:0007669"/>
    <property type="project" value="UniProtKB-UniRule"/>
</dbReference>
<dbReference type="GO" id="GO:0003735">
    <property type="term" value="F:structural constituent of ribosome"/>
    <property type="evidence" value="ECO:0007669"/>
    <property type="project" value="InterPro"/>
</dbReference>
<dbReference type="GO" id="GO:0000049">
    <property type="term" value="F:tRNA binding"/>
    <property type="evidence" value="ECO:0007669"/>
    <property type="project" value="UniProtKB-UniRule"/>
</dbReference>
<dbReference type="GO" id="GO:0006412">
    <property type="term" value="P:translation"/>
    <property type="evidence" value="ECO:0007669"/>
    <property type="project" value="UniProtKB-UniRule"/>
</dbReference>
<dbReference type="FunFam" id="3.30.1440.10:FF:000001">
    <property type="entry name" value="50S ribosomal protein L5"/>
    <property type="match status" value="1"/>
</dbReference>
<dbReference type="Gene3D" id="3.30.1440.10">
    <property type="match status" value="1"/>
</dbReference>
<dbReference type="HAMAP" id="MF_01333_B">
    <property type="entry name" value="Ribosomal_uL5_B"/>
    <property type="match status" value="1"/>
</dbReference>
<dbReference type="InterPro" id="IPR002132">
    <property type="entry name" value="Ribosomal_uL5"/>
</dbReference>
<dbReference type="InterPro" id="IPR020930">
    <property type="entry name" value="Ribosomal_uL5_bac-type"/>
</dbReference>
<dbReference type="InterPro" id="IPR031309">
    <property type="entry name" value="Ribosomal_uL5_C"/>
</dbReference>
<dbReference type="InterPro" id="IPR020929">
    <property type="entry name" value="Ribosomal_uL5_CS"/>
</dbReference>
<dbReference type="InterPro" id="IPR022803">
    <property type="entry name" value="Ribosomal_uL5_dom_sf"/>
</dbReference>
<dbReference type="InterPro" id="IPR031310">
    <property type="entry name" value="Ribosomal_uL5_N"/>
</dbReference>
<dbReference type="NCBIfam" id="NF000585">
    <property type="entry name" value="PRK00010.1"/>
    <property type="match status" value="1"/>
</dbReference>
<dbReference type="PANTHER" id="PTHR11994">
    <property type="entry name" value="60S RIBOSOMAL PROTEIN L11-RELATED"/>
    <property type="match status" value="1"/>
</dbReference>
<dbReference type="Pfam" id="PF00281">
    <property type="entry name" value="Ribosomal_L5"/>
    <property type="match status" value="1"/>
</dbReference>
<dbReference type="Pfam" id="PF00673">
    <property type="entry name" value="Ribosomal_L5_C"/>
    <property type="match status" value="1"/>
</dbReference>
<dbReference type="PIRSF" id="PIRSF002161">
    <property type="entry name" value="Ribosomal_L5"/>
    <property type="match status" value="1"/>
</dbReference>
<dbReference type="SUPFAM" id="SSF55282">
    <property type="entry name" value="RL5-like"/>
    <property type="match status" value="1"/>
</dbReference>
<dbReference type="PROSITE" id="PS00358">
    <property type="entry name" value="RIBOSOMAL_L5"/>
    <property type="match status" value="1"/>
</dbReference>
<gene>
    <name evidence="1" type="primary">rplE</name>
    <name type="ordered locus">A1E_04310</name>
</gene>
<comment type="function">
    <text evidence="1">This is one of the proteins that bind and probably mediate the attachment of the 5S RNA into the large ribosomal subunit, where it forms part of the central protuberance. In the 70S ribosome it contacts protein S13 of the 30S subunit (bridge B1b), connecting the 2 subunits; this bridge is implicated in subunit movement. Contacts the P site tRNA; the 5S rRNA and some of its associated proteins might help stabilize positioning of ribosome-bound tRNAs.</text>
</comment>
<comment type="subunit">
    <text evidence="1">Part of the 50S ribosomal subunit; part of the 5S rRNA/L5/L18/L25 subcomplex. Contacts the 5S rRNA and the P site tRNA. Forms a bridge to the 30S subunit in the 70S ribosome.</text>
</comment>
<comment type="similarity">
    <text evidence="1">Belongs to the universal ribosomal protein uL5 family.</text>
</comment>
<sequence length="181" mass="20907">MLRFKELYQQEIIENLQKEFSYKNKHAIPQIKKVVINMGVGEAIADSKVINNAVNDLTLISGQKPVVTLARKSIATFKLRENMKIGCKVTLRKDRMYDFLERLVIVALPRVKEFRGFSYKSFDGKGNFTFGLKEQIVFPEINYDKIDTIRGMDITIVTSAKTDKESKFLLSGFNFPFYNNF</sequence>
<proteinExistence type="inferred from homology"/>